<accession>P0CK66</accession>
<evidence type="ECO:0000250" key="1">
    <source>
        <dbReference type="UniProtKB" id="P0CK64"/>
    </source>
</evidence>
<evidence type="ECO:0000250" key="2">
    <source>
        <dbReference type="UniProtKB" id="P0CK68"/>
    </source>
</evidence>
<evidence type="ECO:0000250" key="3">
    <source>
        <dbReference type="UniProtKB" id="P0DJW8"/>
    </source>
</evidence>
<evidence type="ECO:0000250" key="4">
    <source>
        <dbReference type="UniProtKB" id="P0DXO5"/>
    </source>
</evidence>
<evidence type="ECO:0000250" key="5">
    <source>
        <dbReference type="UniProtKB" id="P0DXO6"/>
    </source>
</evidence>
<evidence type="ECO:0000305" key="6"/>
<name>PAX_I75A0</name>
<proteinExistence type="inferred from homology"/>
<gene>
    <name type="primary">PA</name>
</gene>
<keyword id="KW-1132">Decay of host mRNAs by virus</keyword>
<keyword id="KW-1262">Eukaryotic host gene expression shutoff by virus</keyword>
<keyword id="KW-1035">Host cytoplasm</keyword>
<keyword id="KW-1190">Host gene expression shutoff by virus</keyword>
<keyword id="KW-1192">Host mRNA suppression by virus</keyword>
<keyword id="KW-1048">Host nucleus</keyword>
<keyword id="KW-0945">Host-virus interaction</keyword>
<keyword id="KW-0688">Ribosomal frameshifting</keyword>
<dbReference type="EMBL" id="CY006049">
    <property type="status" value="NOT_ANNOTATED_CDS"/>
    <property type="molecule type" value="Genomic_RNA"/>
</dbReference>
<dbReference type="SMR" id="P0CK66"/>
<dbReference type="Proteomes" id="UP000000827">
    <property type="component" value="Genome"/>
</dbReference>
<dbReference type="GO" id="GO:0003723">
    <property type="term" value="F:RNA binding"/>
    <property type="evidence" value="ECO:0007669"/>
    <property type="project" value="InterPro"/>
</dbReference>
<dbReference type="GO" id="GO:0039694">
    <property type="term" value="P:viral RNA genome replication"/>
    <property type="evidence" value="ECO:0007669"/>
    <property type="project" value="InterPro"/>
</dbReference>
<dbReference type="GO" id="GO:0075523">
    <property type="term" value="P:viral translational frameshifting"/>
    <property type="evidence" value="ECO:0007669"/>
    <property type="project" value="UniProtKB-KW"/>
</dbReference>
<dbReference type="FunFam" id="3.40.91.90:FF:000001">
    <property type="entry name" value="Polymerase acidic protein"/>
    <property type="match status" value="1"/>
</dbReference>
<dbReference type="Gene3D" id="3.40.91.90">
    <property type="entry name" value="Influenza RNA-dependent RNA polymerase subunit PA, endonuclease domain"/>
    <property type="match status" value="1"/>
</dbReference>
<dbReference type="InterPro" id="IPR001009">
    <property type="entry name" value="PA/PA-X"/>
</dbReference>
<dbReference type="InterPro" id="IPR038372">
    <property type="entry name" value="PA/PA-X_sf"/>
</dbReference>
<dbReference type="Pfam" id="PF00603">
    <property type="entry name" value="Flu_PA"/>
    <property type="match status" value="1"/>
</dbReference>
<feature type="chain" id="PRO_0000419349" description="Protein PA-X">
    <location>
        <begin position="1"/>
        <end position="252"/>
    </location>
</feature>
<feature type="active site" evidence="2">
    <location>
        <position position="80"/>
    </location>
</feature>
<feature type="active site" evidence="2">
    <location>
        <position position="108"/>
    </location>
</feature>
<feature type="site" description="Important for efficient shutoff activity" evidence="5">
    <location>
        <position position="28"/>
    </location>
</feature>
<feature type="site" description="Important for efficient shutoff activity" evidence="5">
    <location>
        <position position="65"/>
    </location>
</feature>
<feature type="site" description="Important for efficient shutoff activity and nuclear localization" evidence="4">
    <location>
        <position position="195"/>
    </location>
</feature>
<feature type="site" description="Important for efficient shutoff activity and nuclear localization" evidence="4">
    <location>
        <position position="198"/>
    </location>
</feature>
<feature type="site" description="Important for efficient shutoff activity and nuclear localization" evidence="4">
    <location>
        <position position="199"/>
    </location>
</feature>
<feature type="site" description="Important for efficient shutoff activity" evidence="3">
    <location>
        <position position="202"/>
    </location>
</feature>
<feature type="site" description="Important for efficient shutoff activity" evidence="3">
    <location>
        <position position="203"/>
    </location>
</feature>
<feature type="site" description="Important for efficient shutoff activity" evidence="3">
    <location>
        <position position="206"/>
    </location>
</feature>
<organism>
    <name type="scientific">Influenza A virus (strain A/Beijing/39/1975 H3N2)</name>
    <dbReference type="NCBI Taxonomy" id="383596"/>
    <lineage>
        <taxon>Viruses</taxon>
        <taxon>Riboviria</taxon>
        <taxon>Orthornavirae</taxon>
        <taxon>Negarnaviricota</taxon>
        <taxon>Polyploviricotina</taxon>
        <taxon>Insthoviricetes</taxon>
        <taxon>Articulavirales</taxon>
        <taxon>Orthomyxoviridae</taxon>
        <taxon>Alphainfluenzavirus</taxon>
        <taxon>Alphainfluenzavirus influenzae</taxon>
        <taxon>Influenza A virus</taxon>
    </lineage>
</organism>
<organismHost>
    <name type="scientific">Aves</name>
    <dbReference type="NCBI Taxonomy" id="8782"/>
</organismHost>
<organismHost>
    <name type="scientific">Cetacea</name>
    <name type="common">whales</name>
    <dbReference type="NCBI Taxonomy" id="9721"/>
</organismHost>
<organismHost>
    <name type="scientific">Homo sapiens</name>
    <name type="common">Human</name>
    <dbReference type="NCBI Taxonomy" id="9606"/>
</organismHost>
<organismHost>
    <name type="scientific">Phocidae</name>
    <name type="common">true seals</name>
    <dbReference type="NCBI Taxonomy" id="9709"/>
</organismHost>
<organismHost>
    <name type="scientific">Sus scrofa</name>
    <name type="common">Pig</name>
    <dbReference type="NCBI Taxonomy" id="9823"/>
</organismHost>
<sequence>MEDFVRQCFNPMIVELAEKAMKEYGEDLKIETNKFAAICTHLEVCFMYSDFHFINEQGESIVVELDDPNALLKHRFEIIEGRDRTMAWTVVNSICNTTGAEKPKFLPDLYDYKENRFIEIGVTRREVHIYYLEKANKIKSENTHIHIFSFTGEEMATKADYTLDEESRARIKTRLFTIRQEMANRGLWDSFVSPKEAKKQLKKDLKSQELCAGLPTKVSRRTSPALRILEPMWMDSNRTAALRASFLKCPKK</sequence>
<protein>
    <recommendedName>
        <fullName>Protein PA-X</fullName>
    </recommendedName>
</protein>
<reference key="1">
    <citation type="submission" date="2005-11" db="EMBL/GenBank/DDBJ databases">
        <title>The NIAID influenza genome sequencing project.</title>
        <authorList>
            <person name="Ghedin E."/>
            <person name="Spiro D."/>
            <person name="Miller N."/>
            <person name="Zaborsky J."/>
            <person name="Feldblyum T."/>
            <person name="Subbu V."/>
            <person name="Shumway M."/>
            <person name="Sparenborg J."/>
            <person name="Groveman L."/>
            <person name="Halpin R."/>
            <person name="Sitz J."/>
            <person name="Koo H."/>
            <person name="Salzberg S.L."/>
            <person name="Webster R.G."/>
            <person name="Hoffmann E."/>
            <person name="Krauss S."/>
            <person name="Naeve C."/>
            <person name="Bao Y."/>
            <person name="Bolotov P."/>
            <person name="Dernovoy D."/>
            <person name="Kiryutin B."/>
            <person name="Lipman D.J."/>
            <person name="Tatusova T."/>
        </authorList>
    </citation>
    <scope>NUCLEOTIDE SEQUENCE [GENOMIC RNA]</scope>
</reference>
<comment type="function">
    <text evidence="1 4">Plays a major role in the shutoff of the host protein expression by cleaving mRNAs probably via an endonuclease activity. This host shutoff allows the virus to escape from the host antiviral response (By similarity). Hijacks host RNA splicing machinery to selectively target host RNAs containing introns for destruction. This may explain the preferential degradation of RNAs that have undergone co- or post-transcriptional processing (By similarity).</text>
</comment>
<comment type="subcellular location">
    <subcellularLocation>
        <location evidence="4">Host cytoplasm</location>
    </subcellularLocation>
    <subcellularLocation>
        <location evidence="4">Host nucleus</location>
    </subcellularLocation>
</comment>
<comment type="alternative products">
    <event type="ribosomal frameshifting"/>
    <isoform>
        <id>P0CK66-1</id>
        <name>PA-X</name>
        <sequence type="displayed"/>
    </isoform>
    <isoform>
        <id>Q30NP4-1</id>
        <name>PA</name>
        <sequence type="external"/>
    </isoform>
</comment>
<comment type="domain">
    <text evidence="1 4">The probable endonuclease active site in the N-terminus and the basic amino acid cluster in the C-terminus are important for the shutoff activity. The C-terminus acts as a nuclear localization signal (By similarity). The C-terminus is recruited to host protein complexes involved in nuclear Pol II RNA processing (By similarity).</text>
</comment>
<comment type="similarity">
    <text evidence="6">Belongs to the influenza viruses PA-X family.</text>
</comment>